<feature type="chain" id="PRO_0000376538" description="Probable cell division protein WhiA">
    <location>
        <begin position="1"/>
        <end position="321"/>
    </location>
</feature>
<feature type="DNA-binding region" description="H-T-H motif" evidence="1">
    <location>
        <begin position="276"/>
        <end position="309"/>
    </location>
</feature>
<keyword id="KW-0131">Cell cycle</keyword>
<keyword id="KW-0132">Cell division</keyword>
<keyword id="KW-0238">DNA-binding</keyword>
<keyword id="KW-1185">Reference proteome</keyword>
<proteinExistence type="inferred from homology"/>
<dbReference type="EMBL" id="CP001034">
    <property type="protein sequence ID" value="ACB85588.1"/>
    <property type="molecule type" value="Genomic_DNA"/>
</dbReference>
<dbReference type="RefSeq" id="WP_012448445.1">
    <property type="nucleotide sequence ID" value="NC_010718.1"/>
</dbReference>
<dbReference type="SMR" id="B2A6Z7"/>
<dbReference type="FunCoup" id="B2A6Z7">
    <property type="interactions" value="28"/>
</dbReference>
<dbReference type="STRING" id="457570.Nther_2021"/>
<dbReference type="KEGG" id="nth:Nther_2021"/>
<dbReference type="eggNOG" id="COG1481">
    <property type="taxonomic scope" value="Bacteria"/>
</dbReference>
<dbReference type="HOGENOM" id="CLU_053282_0_0_9"/>
<dbReference type="InParanoid" id="B2A6Z7"/>
<dbReference type="OrthoDB" id="401278at2"/>
<dbReference type="Proteomes" id="UP000001683">
    <property type="component" value="Chromosome"/>
</dbReference>
<dbReference type="GO" id="GO:0003677">
    <property type="term" value="F:DNA binding"/>
    <property type="evidence" value="ECO:0007669"/>
    <property type="project" value="UniProtKB-UniRule"/>
</dbReference>
<dbReference type="GO" id="GO:0051301">
    <property type="term" value="P:cell division"/>
    <property type="evidence" value="ECO:0007669"/>
    <property type="project" value="UniProtKB-UniRule"/>
</dbReference>
<dbReference type="GO" id="GO:0043937">
    <property type="term" value="P:regulation of sporulation"/>
    <property type="evidence" value="ECO:0007669"/>
    <property type="project" value="InterPro"/>
</dbReference>
<dbReference type="Gene3D" id="3.10.28.10">
    <property type="entry name" value="Homing endonucleases"/>
    <property type="match status" value="1"/>
</dbReference>
<dbReference type="HAMAP" id="MF_01420">
    <property type="entry name" value="HTH_type_WhiA"/>
    <property type="match status" value="1"/>
</dbReference>
<dbReference type="InterPro" id="IPR027434">
    <property type="entry name" value="Homing_endonucl"/>
</dbReference>
<dbReference type="InterPro" id="IPR018478">
    <property type="entry name" value="Sporu_reg_WhiA_N_dom"/>
</dbReference>
<dbReference type="InterPro" id="IPR003802">
    <property type="entry name" value="Sporulation_regulator_WhiA"/>
</dbReference>
<dbReference type="InterPro" id="IPR023054">
    <property type="entry name" value="Sporulation_regulator_WhiA_C"/>
</dbReference>
<dbReference type="InterPro" id="IPR039518">
    <property type="entry name" value="WhiA_LAGLIDADG_dom"/>
</dbReference>
<dbReference type="NCBIfam" id="TIGR00647">
    <property type="entry name" value="DNA_bind_WhiA"/>
    <property type="match status" value="1"/>
</dbReference>
<dbReference type="PANTHER" id="PTHR37307">
    <property type="entry name" value="CELL DIVISION PROTEIN WHIA-RELATED"/>
    <property type="match status" value="1"/>
</dbReference>
<dbReference type="PANTHER" id="PTHR37307:SF1">
    <property type="entry name" value="CELL DIVISION PROTEIN WHIA-RELATED"/>
    <property type="match status" value="1"/>
</dbReference>
<dbReference type="Pfam" id="PF02650">
    <property type="entry name" value="HTH_WhiA"/>
    <property type="match status" value="1"/>
</dbReference>
<dbReference type="Pfam" id="PF14527">
    <property type="entry name" value="LAGLIDADG_WhiA"/>
    <property type="match status" value="1"/>
</dbReference>
<dbReference type="Pfam" id="PF10298">
    <property type="entry name" value="WhiA_N"/>
    <property type="match status" value="1"/>
</dbReference>
<dbReference type="SUPFAM" id="SSF55608">
    <property type="entry name" value="Homing endonucleases"/>
    <property type="match status" value="1"/>
</dbReference>
<sequence>MSFAKSCKNELSRIEINRECCERAELAAFIHMNGSLTIKGDVTLHLTTENPAIARRIFRVFKSRFKKEMQILMRKKMRLQKGNSYSLILTGKNTVSLVLSNLEITKGSFDLNTGITPELVANRCCKRAYLRGAFMARGSIANPDASYHMEMTADYEEYLDDLIKVMQYFELSPGKLARKKEYVSYLKDSEQICEFLNIIGAHKTLLDYENVRVMKGMRNKINRLVNCETANLQKTVVASLRHIKNIQTIDENLGLTQLPKSLQEVAIKRVEYPEANLKELGELLEPPVGKSGVNHRLRKLEKIAEQLHQTGYYDENNGYLQ</sequence>
<comment type="function">
    <text evidence="1">Involved in cell division and chromosome segregation.</text>
</comment>
<comment type="similarity">
    <text evidence="1">Belongs to the WhiA family.</text>
</comment>
<gene>
    <name evidence="1" type="primary">whiA</name>
    <name type="ordered locus">Nther_2021</name>
</gene>
<organism>
    <name type="scientific">Natranaerobius thermophilus (strain ATCC BAA-1301 / DSM 18059 / JW/NM-WN-LF)</name>
    <dbReference type="NCBI Taxonomy" id="457570"/>
    <lineage>
        <taxon>Bacteria</taxon>
        <taxon>Bacillati</taxon>
        <taxon>Bacillota</taxon>
        <taxon>Clostridia</taxon>
        <taxon>Natranaerobiales</taxon>
        <taxon>Natranaerobiaceae</taxon>
        <taxon>Natranaerobius</taxon>
    </lineage>
</organism>
<evidence type="ECO:0000255" key="1">
    <source>
        <dbReference type="HAMAP-Rule" id="MF_01420"/>
    </source>
</evidence>
<protein>
    <recommendedName>
        <fullName evidence="1">Probable cell division protein WhiA</fullName>
    </recommendedName>
</protein>
<accession>B2A6Z7</accession>
<name>WHIA_NATTJ</name>
<reference key="1">
    <citation type="submission" date="2008-04" db="EMBL/GenBank/DDBJ databases">
        <title>Complete sequence of chromosome of Natranaerobius thermophilus JW/NM-WN-LF.</title>
        <authorList>
            <consortium name="US DOE Joint Genome Institute"/>
            <person name="Copeland A."/>
            <person name="Lucas S."/>
            <person name="Lapidus A."/>
            <person name="Glavina del Rio T."/>
            <person name="Dalin E."/>
            <person name="Tice H."/>
            <person name="Bruce D."/>
            <person name="Goodwin L."/>
            <person name="Pitluck S."/>
            <person name="Chertkov O."/>
            <person name="Brettin T."/>
            <person name="Detter J.C."/>
            <person name="Han C."/>
            <person name="Kuske C.R."/>
            <person name="Schmutz J."/>
            <person name="Larimer F."/>
            <person name="Land M."/>
            <person name="Hauser L."/>
            <person name="Kyrpides N."/>
            <person name="Lykidis A."/>
            <person name="Mesbah N.M."/>
            <person name="Wiegel J."/>
        </authorList>
    </citation>
    <scope>NUCLEOTIDE SEQUENCE [LARGE SCALE GENOMIC DNA]</scope>
    <source>
        <strain>ATCC BAA-1301 / DSM 18059 / JW/NM-WN-LF</strain>
    </source>
</reference>